<gene>
    <name evidence="1" type="primary">odhA</name>
    <name type="ordered locus">RBAM_019130</name>
</gene>
<organism>
    <name type="scientific">Bacillus velezensis (strain DSM 23117 / BGSC 10A6 / LMG 26770 / FZB42)</name>
    <name type="common">Bacillus amyloliquefaciens subsp. plantarum</name>
    <dbReference type="NCBI Taxonomy" id="326423"/>
    <lineage>
        <taxon>Bacteria</taxon>
        <taxon>Bacillati</taxon>
        <taxon>Bacillota</taxon>
        <taxon>Bacilli</taxon>
        <taxon>Bacillales</taxon>
        <taxon>Bacillaceae</taxon>
        <taxon>Bacillus</taxon>
        <taxon>Bacillus amyloliquefaciens group</taxon>
    </lineage>
</organism>
<evidence type="ECO:0000255" key="1">
    <source>
        <dbReference type="HAMAP-Rule" id="MF_01169"/>
    </source>
</evidence>
<evidence type="ECO:0000256" key="2">
    <source>
        <dbReference type="SAM" id="MobiDB-lite"/>
    </source>
</evidence>
<protein>
    <recommendedName>
        <fullName evidence="1">2-oxoglutarate dehydrogenase E1 component</fullName>
        <ecNumber evidence="1">1.2.4.2</ecNumber>
    </recommendedName>
    <alternativeName>
        <fullName evidence="1">Alpha-ketoglutarate dehydrogenase</fullName>
    </alternativeName>
</protein>
<name>ODO1_BACVZ</name>
<sequence length="944" mass="106267">MFQNNMKQRMNWEDFYGPNLGYALELYDQYAEDPDSIDPDLKDMFDELGAPPSQIKEASGTKEQGRVTADLIQKIAAAVKLAEDIRTYGHLNASVNPLRKDPKKSELFPLSDYGLTEEEMKAIPASVICKDAPANITNGLEAIQHLRNTYKRTISFEFDHVHDFEERAWITKMVESGELFRKNSPEKLSAVLERLTEVEGFEQFLHRTFVGQKRFSIEGLDALVPVLDDIIAQSVKAGTTNVNIGMAHRGRLNVLAHVLGKPYEIIFSEFQHAPNKDLVPSEGSTGISYGWTGDVKYHLGADRQLQDAETKSARITLANNPSHLEFINPIVEGSTRAAQETRTQKGYPVQDETKSLAILIHGDAAFPGEGIVAETLNLSSLKGYQVGGAIHIIANNMIGFTTESDESRSTKYASDLAKGYEIPIVHVNADDPEACLSAVKFAVEYRKRFNKDFLIDLIGYRRYGHNEMDEPSTTQPMLYDAVRKHPTVKRIFAEKLVSEGLISEEKAQNIETAVTKRIEDAYKKVPAKKEDAVREIELPEPVSNGFPDVDTAIDFDVLRKLNGELINWPESFNVFGKLKRILERRAKAFDDDRKVEWSLAESLAFASILKDGTPIRLTGQDSERGTFAQRNLVLHDSETGEEFVALHHLDDCAASFTVHNSPLSEGSVLGFEYGYNVYSPETLVMWEAQYGDFANAAQVYFDQFISAGRAKWGQKSGLVMLLPHGYEGQGPEHSSGRVERFLQLAAENNWTVANLTSAAQYFHILRRQAKMLLREEIRPLVIMTPKSLLRNPNTVSEVQELSESRFKPVYEQSGLSHAYEKVTRVVLSSGKVSIDISDHFNKMEGDKDWLHIARIEQLYPFPAKDTKELFAKLPNLQEIVWVQEEPQNMGAWSYISPYLSEIAPKGVNVQYIGRRRRSSPAEGDPTVHKKEQERIVSDSLTRKN</sequence>
<feature type="chain" id="PRO_1000065696" description="2-oxoglutarate dehydrogenase E1 component">
    <location>
        <begin position="1"/>
        <end position="944"/>
    </location>
</feature>
<feature type="region of interest" description="Disordered" evidence="2">
    <location>
        <begin position="915"/>
        <end position="944"/>
    </location>
</feature>
<feature type="compositionally biased region" description="Basic and acidic residues" evidence="2">
    <location>
        <begin position="925"/>
        <end position="936"/>
    </location>
</feature>
<keyword id="KW-0324">Glycolysis</keyword>
<keyword id="KW-0560">Oxidoreductase</keyword>
<keyword id="KW-0786">Thiamine pyrophosphate</keyword>
<dbReference type="EC" id="1.2.4.2" evidence="1"/>
<dbReference type="EMBL" id="CP000560">
    <property type="protein sequence ID" value="ABS74275.1"/>
    <property type="molecule type" value="Genomic_DNA"/>
</dbReference>
<dbReference type="SMR" id="A7Z5J9"/>
<dbReference type="GeneID" id="93081042"/>
<dbReference type="KEGG" id="bay:RBAM_019130"/>
<dbReference type="HOGENOM" id="CLU_004709_1_0_9"/>
<dbReference type="Proteomes" id="UP000001120">
    <property type="component" value="Chromosome"/>
</dbReference>
<dbReference type="GO" id="GO:0005829">
    <property type="term" value="C:cytosol"/>
    <property type="evidence" value="ECO:0007669"/>
    <property type="project" value="TreeGrafter"/>
</dbReference>
<dbReference type="GO" id="GO:0045252">
    <property type="term" value="C:oxoglutarate dehydrogenase complex"/>
    <property type="evidence" value="ECO:0007669"/>
    <property type="project" value="TreeGrafter"/>
</dbReference>
<dbReference type="GO" id="GO:0004591">
    <property type="term" value="F:oxoglutarate dehydrogenase (succinyl-transferring) activity"/>
    <property type="evidence" value="ECO:0007669"/>
    <property type="project" value="UniProtKB-UniRule"/>
</dbReference>
<dbReference type="GO" id="GO:0030976">
    <property type="term" value="F:thiamine pyrophosphate binding"/>
    <property type="evidence" value="ECO:0007669"/>
    <property type="project" value="UniProtKB-UniRule"/>
</dbReference>
<dbReference type="GO" id="GO:0006096">
    <property type="term" value="P:glycolytic process"/>
    <property type="evidence" value="ECO:0007669"/>
    <property type="project" value="UniProtKB-UniRule"/>
</dbReference>
<dbReference type="GO" id="GO:0006099">
    <property type="term" value="P:tricarboxylic acid cycle"/>
    <property type="evidence" value="ECO:0007669"/>
    <property type="project" value="TreeGrafter"/>
</dbReference>
<dbReference type="CDD" id="cd02016">
    <property type="entry name" value="TPP_E1_OGDC_like"/>
    <property type="match status" value="1"/>
</dbReference>
<dbReference type="FunFam" id="3.40.50.11610:FF:000002">
    <property type="entry name" value="2-oxoglutarate dehydrogenase E1 component"/>
    <property type="match status" value="1"/>
</dbReference>
<dbReference type="FunFam" id="3.40.50.970:FF:000036">
    <property type="entry name" value="2-oxoglutarate dehydrogenase E1 component"/>
    <property type="match status" value="1"/>
</dbReference>
<dbReference type="Gene3D" id="3.40.50.12470">
    <property type="match status" value="1"/>
</dbReference>
<dbReference type="Gene3D" id="3.40.50.970">
    <property type="match status" value="1"/>
</dbReference>
<dbReference type="Gene3D" id="3.40.50.11610">
    <property type="entry name" value="Multifunctional 2-oxoglutarate metabolism enzyme, C-terminal domain"/>
    <property type="match status" value="1"/>
</dbReference>
<dbReference type="HAMAP" id="MF_01169">
    <property type="entry name" value="SucA_OdhA"/>
    <property type="match status" value="1"/>
</dbReference>
<dbReference type="InterPro" id="IPR011603">
    <property type="entry name" value="2oxoglutarate_DH_E1"/>
</dbReference>
<dbReference type="InterPro" id="IPR023784">
    <property type="entry name" value="2oxoglutarate_DH_E1_bac"/>
</dbReference>
<dbReference type="InterPro" id="IPR001017">
    <property type="entry name" value="DH_E1"/>
</dbReference>
<dbReference type="InterPro" id="IPR042179">
    <property type="entry name" value="KGD_C_sf"/>
</dbReference>
<dbReference type="InterPro" id="IPR031717">
    <property type="entry name" value="ODO-1/KGD_C"/>
</dbReference>
<dbReference type="InterPro" id="IPR029061">
    <property type="entry name" value="THDP-binding"/>
</dbReference>
<dbReference type="InterPro" id="IPR005475">
    <property type="entry name" value="Transketolase-like_Pyr-bd"/>
</dbReference>
<dbReference type="NCBIfam" id="TIGR00239">
    <property type="entry name" value="2oxo_dh_E1"/>
    <property type="match status" value="1"/>
</dbReference>
<dbReference type="NCBIfam" id="NF006914">
    <property type="entry name" value="PRK09404.1"/>
    <property type="match status" value="1"/>
</dbReference>
<dbReference type="NCBIfam" id="NF008907">
    <property type="entry name" value="PRK12270.1"/>
    <property type="match status" value="1"/>
</dbReference>
<dbReference type="PANTHER" id="PTHR23152:SF4">
    <property type="entry name" value="2-OXOADIPATE DEHYDROGENASE COMPLEX COMPONENT E1"/>
    <property type="match status" value="1"/>
</dbReference>
<dbReference type="PANTHER" id="PTHR23152">
    <property type="entry name" value="2-OXOGLUTARATE DEHYDROGENASE"/>
    <property type="match status" value="1"/>
</dbReference>
<dbReference type="Pfam" id="PF00676">
    <property type="entry name" value="E1_dh"/>
    <property type="match status" value="1"/>
</dbReference>
<dbReference type="Pfam" id="PF16870">
    <property type="entry name" value="OxoGdeHyase_C"/>
    <property type="match status" value="1"/>
</dbReference>
<dbReference type="Pfam" id="PF02779">
    <property type="entry name" value="Transket_pyr"/>
    <property type="match status" value="1"/>
</dbReference>
<dbReference type="PIRSF" id="PIRSF000157">
    <property type="entry name" value="Oxoglu_dh_E1"/>
    <property type="match status" value="1"/>
</dbReference>
<dbReference type="SMART" id="SM00861">
    <property type="entry name" value="Transket_pyr"/>
    <property type="match status" value="1"/>
</dbReference>
<dbReference type="SUPFAM" id="SSF52518">
    <property type="entry name" value="Thiamin diphosphate-binding fold (THDP-binding)"/>
    <property type="match status" value="2"/>
</dbReference>
<proteinExistence type="inferred from homology"/>
<accession>A7Z5J9</accession>
<reference key="1">
    <citation type="journal article" date="2007" name="Nat. Biotechnol.">
        <title>Comparative analysis of the complete genome sequence of the plant growth-promoting bacterium Bacillus amyloliquefaciens FZB42.</title>
        <authorList>
            <person name="Chen X.H."/>
            <person name="Koumoutsi A."/>
            <person name="Scholz R."/>
            <person name="Eisenreich A."/>
            <person name="Schneider K."/>
            <person name="Heinemeyer I."/>
            <person name="Morgenstern B."/>
            <person name="Voss B."/>
            <person name="Hess W.R."/>
            <person name="Reva O."/>
            <person name="Junge H."/>
            <person name="Voigt B."/>
            <person name="Jungblut P.R."/>
            <person name="Vater J."/>
            <person name="Suessmuth R."/>
            <person name="Liesegang H."/>
            <person name="Strittmatter A."/>
            <person name="Gottschalk G."/>
            <person name="Borriss R."/>
        </authorList>
    </citation>
    <scope>NUCLEOTIDE SEQUENCE [LARGE SCALE GENOMIC DNA]</scope>
    <source>
        <strain>DSM 23117 / BGSC 10A6 / LMG 26770 / FZB42</strain>
    </source>
</reference>
<comment type="function">
    <text evidence="1">E1 component of the 2-oxoglutarate dehydrogenase (OGDH) complex which catalyzes the decarboxylation of 2-oxoglutarate, the first step in the conversion of 2-oxoglutarate to succinyl-CoA and CO(2).</text>
</comment>
<comment type="catalytic activity">
    <reaction evidence="1">
        <text>N(6)-[(R)-lipoyl]-L-lysyl-[protein] + 2-oxoglutarate + H(+) = N(6)-[(R)-S(8)-succinyldihydrolipoyl]-L-lysyl-[protein] + CO2</text>
        <dbReference type="Rhea" id="RHEA:12188"/>
        <dbReference type="Rhea" id="RHEA-COMP:10474"/>
        <dbReference type="Rhea" id="RHEA-COMP:20092"/>
        <dbReference type="ChEBI" id="CHEBI:15378"/>
        <dbReference type="ChEBI" id="CHEBI:16526"/>
        <dbReference type="ChEBI" id="CHEBI:16810"/>
        <dbReference type="ChEBI" id="CHEBI:83099"/>
        <dbReference type="ChEBI" id="CHEBI:83120"/>
        <dbReference type="EC" id="1.2.4.2"/>
    </reaction>
</comment>
<comment type="cofactor">
    <cofactor evidence="1">
        <name>thiamine diphosphate</name>
        <dbReference type="ChEBI" id="CHEBI:58937"/>
    </cofactor>
</comment>
<comment type="subunit">
    <text evidence="1">Homodimer. Part of the 2-oxoglutarate dehydrogenase (OGDH) complex composed of E1 (2-oxoglutarate dehydrogenase), E2 (dihydrolipoamide succinyltransferase) and E3 (dihydrolipoamide dehydrogenase); the complex contains multiple copies of the three enzymatic components (E1, E2 and E3).</text>
</comment>
<comment type="similarity">
    <text evidence="1">Belongs to the alpha-ketoglutarate dehydrogenase family.</text>
</comment>